<accession>P05451</accession>
<accession>P11379</accession>
<accession>Q4ZG28</accession>
<name>REG1A_HUMAN</name>
<sequence length="166" mass="18731">MAQTSSYFMLISCLMFLSQSQGQEAQTELPQARISCPEGTNAYRSYCYYFNEDRETWVDADLYCQNMNSGNLVSVLTQAEGAFVASLIKESGTDDFNVWIGLHDPKKNRRWHWSSGSLVSYKSWGIGAPSSVNPGYCVSLTSSTGFQKWKDVPCEDKFSFVCKFKN</sequence>
<organism>
    <name type="scientific">Homo sapiens</name>
    <name type="common">Human</name>
    <dbReference type="NCBI Taxonomy" id="9606"/>
    <lineage>
        <taxon>Eukaryota</taxon>
        <taxon>Metazoa</taxon>
        <taxon>Chordata</taxon>
        <taxon>Craniata</taxon>
        <taxon>Vertebrata</taxon>
        <taxon>Euteleostomi</taxon>
        <taxon>Mammalia</taxon>
        <taxon>Eutheria</taxon>
        <taxon>Euarchontoglires</taxon>
        <taxon>Primates</taxon>
        <taxon>Haplorrhini</taxon>
        <taxon>Catarrhini</taxon>
        <taxon>Hominidae</taxon>
        <taxon>Homo</taxon>
    </lineage>
</organism>
<feature type="signal peptide" evidence="2 5">
    <location>
        <begin position="1"/>
        <end position="22"/>
    </location>
</feature>
<feature type="chain" id="PRO_0000017424" description="Lithostathine-1-alpha">
    <location>
        <begin position="23"/>
        <end position="166"/>
    </location>
</feature>
<feature type="domain" description="C-type lectin" evidence="1">
    <location>
        <begin position="34"/>
        <end position="164"/>
    </location>
</feature>
<feature type="modified residue" description="Pyrrolidone carboxylic acid" evidence="5">
    <location>
        <position position="23"/>
    </location>
</feature>
<feature type="glycosylation site" description="O-linked (GalNAc) threonine" evidence="5">
    <location>
        <position position="27"/>
    </location>
</feature>
<feature type="disulfide bond" evidence="1 3">
    <location>
        <begin position="36"/>
        <end position="47"/>
    </location>
</feature>
<feature type="disulfide bond" evidence="1 3">
    <location>
        <begin position="64"/>
        <end position="162"/>
    </location>
</feature>
<feature type="disulfide bond" evidence="1 3">
    <location>
        <begin position="137"/>
        <end position="154"/>
    </location>
</feature>
<feature type="sequence conflict" description="In Ref. 3; AAA60546/AAA60545." evidence="6" ref="3">
    <original>SSY</original>
    <variation>NSF</variation>
    <location>
        <begin position="5"/>
        <end position="7"/>
    </location>
</feature>
<feature type="sequence conflict" description="In Ref. 3; AAA60546/AAA60545." evidence="6" ref="3">
    <original>C</original>
    <variation>S</variation>
    <location>
        <position position="13"/>
    </location>
</feature>
<feature type="sequence conflict" description="In Ref. 3; AAA60546." evidence="6" ref="3">
    <original>Q</original>
    <variation>L</variation>
    <location>
        <position position="19"/>
    </location>
</feature>
<feature type="sequence conflict" description="In Ref. 2; AAA36559." evidence="6" ref="2">
    <original>G</original>
    <variation>A</variation>
    <location>
        <position position="101"/>
    </location>
</feature>
<feature type="helix" evidence="7">
    <location>
        <begin position="31"/>
        <end position="33"/>
    </location>
</feature>
<feature type="strand" evidence="7">
    <location>
        <begin position="41"/>
        <end position="43"/>
    </location>
</feature>
<feature type="strand" evidence="7">
    <location>
        <begin position="46"/>
        <end position="55"/>
    </location>
</feature>
<feature type="helix" evidence="7">
    <location>
        <begin position="57"/>
        <end position="66"/>
    </location>
</feature>
<feature type="helix" evidence="7">
    <location>
        <begin position="78"/>
        <end position="90"/>
    </location>
</feature>
<feature type="strand" evidence="7">
    <location>
        <begin position="96"/>
        <end position="103"/>
    </location>
</feature>
<feature type="strand" evidence="7">
    <location>
        <begin position="107"/>
        <end position="109"/>
    </location>
</feature>
<feature type="strand" evidence="7">
    <location>
        <begin position="131"/>
        <end position="133"/>
    </location>
</feature>
<feature type="strand" evidence="7">
    <location>
        <begin position="136"/>
        <end position="141"/>
    </location>
</feature>
<feature type="helix" evidence="7">
    <location>
        <begin position="142"/>
        <end position="144"/>
    </location>
</feature>
<feature type="strand" evidence="7">
    <location>
        <begin position="148"/>
        <end position="152"/>
    </location>
</feature>
<feature type="strand" evidence="7">
    <location>
        <begin position="158"/>
        <end position="165"/>
    </location>
</feature>
<evidence type="ECO:0000255" key="1">
    <source>
        <dbReference type="PROSITE-ProRule" id="PRU00040"/>
    </source>
</evidence>
<evidence type="ECO:0000269" key="2">
    <source>
    </source>
</evidence>
<evidence type="ECO:0000269" key="3">
    <source>
    </source>
</evidence>
<evidence type="ECO:0000269" key="4">
    <source>
    </source>
</evidence>
<evidence type="ECO:0000269" key="5">
    <source>
    </source>
</evidence>
<evidence type="ECO:0000305" key="6"/>
<evidence type="ECO:0007829" key="7">
    <source>
        <dbReference type="PDB" id="1QDD"/>
    </source>
</evidence>
<comment type="function">
    <text>Might act as an inhibitor of spontaneous calcium carbonate precipitation. May be associated with neuronal sprouting in brain, and with brain and pancreas regeneration.</text>
</comment>
<comment type="interaction">
    <interactant intactId="EBI-20721755">
        <id>P05451</id>
    </interactant>
    <interactant intactId="EBI-716901">
        <id>P48304</id>
        <label>REG1B</label>
    </interactant>
    <organismsDiffer>false</organismsDiffer>
    <experiments>4</experiments>
</comment>
<comment type="subcellular location">
    <subcellularLocation>
        <location>Secreted</location>
    </subcellularLocation>
</comment>
<comment type="tissue specificity">
    <text evidence="4">In pancreatic acinar cells and, in lower levels, in brain. Enhanced expression of PSP-related transcripts and intraneuronal accumulation of PSP-like proteins is found in brain from Alzheimer disease and Down syndrome patients.</text>
</comment>
<comment type="developmental stage">
    <text evidence="4">High expression levels in fetal and infant brains; much lower in adult brains.</text>
</comment>
<comment type="PTM">
    <text evidence="5">The composition of the O-linked carbohydrate on Thr-27 is complex and varied. In the crystallographic structure, the attached sugar appears to be N-acetylglucosamine, typical of an intracellular protein, rather than N-acetylgalactosamine.</text>
</comment>
<comment type="online information" name="Functional Glycomics Gateway - Glycan Binding">
    <link uri="http://www.functionalglycomics.org/glycomics/GBPServlet?&amp;operationType=view&amp;cbpId=cbp_hum_Ctlect_254"/>
    <text>Lithostathine A</text>
</comment>
<proteinExistence type="evidence at protein level"/>
<gene>
    <name type="primary">REG1A</name>
    <name type="synonym">PSPS</name>
    <name type="synonym">PSPS1</name>
    <name type="synonym">REG</name>
</gene>
<keyword id="KW-0002">3D-structure</keyword>
<keyword id="KW-0903">Direct protein sequencing</keyword>
<keyword id="KW-1015">Disulfide bond</keyword>
<keyword id="KW-0325">Glycoprotein</keyword>
<keyword id="KW-0430">Lectin</keyword>
<keyword id="KW-1267">Proteomics identification</keyword>
<keyword id="KW-0873">Pyrrolidone carboxylic acid</keyword>
<keyword id="KW-1185">Reference proteome</keyword>
<keyword id="KW-0964">Secreted</keyword>
<keyword id="KW-0732">Signal</keyword>
<protein>
    <recommendedName>
        <fullName>Lithostathine-1-alpha</fullName>
    </recommendedName>
    <alternativeName>
        <fullName>Islet cells regeneration factor</fullName>
        <shortName>ICRF</shortName>
    </alternativeName>
    <alternativeName>
        <fullName>Islet of Langerhans regenerating protein</fullName>
        <shortName>REG</shortName>
    </alternativeName>
    <alternativeName>
        <fullName>Pancreatic stone protein</fullName>
        <shortName>PSP</shortName>
    </alternativeName>
    <alternativeName>
        <fullName>Pancreatic thread protein</fullName>
        <shortName>PTP</shortName>
    </alternativeName>
    <alternativeName>
        <fullName>Regenerating islet-derived protein 1-alpha</fullName>
        <shortName>REG-1-alpha</shortName>
    </alternativeName>
    <alternativeName>
        <fullName>Regenerating protein I alpha</fullName>
    </alternativeName>
</protein>
<reference key="1">
    <citation type="journal article" date="1988" name="J. Biol. Chem.">
        <title>A novel gene activated in regenerating islets.</title>
        <authorList>
            <person name="Terazono K."/>
            <person name="Yamamoto H."/>
            <person name="Takasawa S."/>
            <person name="Shiga K."/>
            <person name="Yonemura Y."/>
            <person name="Tochino Y."/>
            <person name="Okamoto H."/>
        </authorList>
    </citation>
    <scope>NUCLEOTIDE SEQUENCE [MRNA]</scope>
</reference>
<reference key="2">
    <citation type="journal article" date="1990" name="J. Biol. Chem.">
        <title>Complete nucleotide sequence of human reg gene and its expression in normal and tumoral tissues. The reg protein, pancreatic stone protein, and pancreatic thread protein are one and the same product of the gene.</title>
        <authorList>
            <person name="Watanabe T."/>
            <person name="Yonekura H."/>
            <person name="Terazono K."/>
            <person name="Yamamoto H."/>
            <person name="Okamoto H."/>
        </authorList>
    </citation>
    <scope>NUCLEOTIDE SEQUENCE [GENOMIC DNA]</scope>
</reference>
<reference key="3">
    <citation type="journal article" date="1989" name="J. Clin. Invest.">
        <title>Secretory pancreatic stone protein messenger RNA. Nucleotide sequence and expression in chronic calcifying pancreatitis.</title>
        <authorList>
            <person name="Giorgi D."/>
            <person name="Bernard J.-P."/>
            <person name="Rouquier S."/>
            <person name="Iovanna J."/>
            <person name="Sarles H."/>
            <person name="Dagorn J.-C."/>
        </authorList>
    </citation>
    <scope>NUCLEOTIDE SEQUENCE [GENOMIC DNA / MRNA]</scope>
    <source>
        <tissue>Pancreas</tissue>
    </source>
</reference>
<reference key="4">
    <citation type="submission" date="1999-07" db="EMBL/GenBank/DDBJ databases">
        <authorList>
            <person name="Boonyasrisawat W."/>
            <person name="Tandhanand-Banchuin N."/>
            <person name="Vannasaeng S."/>
            <person name="Yenchitsomanus P."/>
        </authorList>
    </citation>
    <scope>NUCLEOTIDE SEQUENCE [MRNA]</scope>
</reference>
<reference key="5">
    <citation type="journal article" date="2005" name="Nature">
        <title>Generation and annotation of the DNA sequences of human chromosomes 2 and 4.</title>
        <authorList>
            <person name="Hillier L.W."/>
            <person name="Graves T.A."/>
            <person name="Fulton R.S."/>
            <person name="Fulton L.A."/>
            <person name="Pepin K.H."/>
            <person name="Minx P."/>
            <person name="Wagner-McPherson C."/>
            <person name="Layman D."/>
            <person name="Wylie K."/>
            <person name="Sekhon M."/>
            <person name="Becker M.C."/>
            <person name="Fewell G.A."/>
            <person name="Delehaunty K.D."/>
            <person name="Miner T.L."/>
            <person name="Nash W.E."/>
            <person name="Kremitzki C."/>
            <person name="Oddy L."/>
            <person name="Du H."/>
            <person name="Sun H."/>
            <person name="Bradshaw-Cordum H."/>
            <person name="Ali J."/>
            <person name="Carter J."/>
            <person name="Cordes M."/>
            <person name="Harris A."/>
            <person name="Isak A."/>
            <person name="van Brunt A."/>
            <person name="Nguyen C."/>
            <person name="Du F."/>
            <person name="Courtney L."/>
            <person name="Kalicki J."/>
            <person name="Ozersky P."/>
            <person name="Abbott S."/>
            <person name="Armstrong J."/>
            <person name="Belter E.A."/>
            <person name="Caruso L."/>
            <person name="Cedroni M."/>
            <person name="Cotton M."/>
            <person name="Davidson T."/>
            <person name="Desai A."/>
            <person name="Elliott G."/>
            <person name="Erb T."/>
            <person name="Fronick C."/>
            <person name="Gaige T."/>
            <person name="Haakenson W."/>
            <person name="Haglund K."/>
            <person name="Holmes A."/>
            <person name="Harkins R."/>
            <person name="Kim K."/>
            <person name="Kruchowski S.S."/>
            <person name="Strong C.M."/>
            <person name="Grewal N."/>
            <person name="Goyea E."/>
            <person name="Hou S."/>
            <person name="Levy A."/>
            <person name="Martinka S."/>
            <person name="Mead K."/>
            <person name="McLellan M.D."/>
            <person name="Meyer R."/>
            <person name="Randall-Maher J."/>
            <person name="Tomlinson C."/>
            <person name="Dauphin-Kohlberg S."/>
            <person name="Kozlowicz-Reilly A."/>
            <person name="Shah N."/>
            <person name="Swearengen-Shahid S."/>
            <person name="Snider J."/>
            <person name="Strong J.T."/>
            <person name="Thompson J."/>
            <person name="Yoakum M."/>
            <person name="Leonard S."/>
            <person name="Pearman C."/>
            <person name="Trani L."/>
            <person name="Radionenko M."/>
            <person name="Waligorski J.E."/>
            <person name="Wang C."/>
            <person name="Rock S.M."/>
            <person name="Tin-Wollam A.-M."/>
            <person name="Maupin R."/>
            <person name="Latreille P."/>
            <person name="Wendl M.C."/>
            <person name="Yang S.-P."/>
            <person name="Pohl C."/>
            <person name="Wallis J.W."/>
            <person name="Spieth J."/>
            <person name="Bieri T.A."/>
            <person name="Berkowicz N."/>
            <person name="Nelson J.O."/>
            <person name="Osborne J."/>
            <person name="Ding L."/>
            <person name="Meyer R."/>
            <person name="Sabo A."/>
            <person name="Shotland Y."/>
            <person name="Sinha P."/>
            <person name="Wohldmann P.E."/>
            <person name="Cook L.L."/>
            <person name="Hickenbotham M.T."/>
            <person name="Eldred J."/>
            <person name="Williams D."/>
            <person name="Jones T.A."/>
            <person name="She X."/>
            <person name="Ciccarelli F.D."/>
            <person name="Izaurralde E."/>
            <person name="Taylor J."/>
            <person name="Schmutz J."/>
            <person name="Myers R.M."/>
            <person name="Cox D.R."/>
            <person name="Huang X."/>
            <person name="McPherson J.D."/>
            <person name="Mardis E.R."/>
            <person name="Clifton S.W."/>
            <person name="Warren W.C."/>
            <person name="Chinwalla A.T."/>
            <person name="Eddy S.R."/>
            <person name="Marra M.A."/>
            <person name="Ovcharenko I."/>
            <person name="Furey T.S."/>
            <person name="Miller W."/>
            <person name="Eichler E.E."/>
            <person name="Bork P."/>
            <person name="Suyama M."/>
            <person name="Torrents D."/>
            <person name="Waterston R.H."/>
            <person name="Wilson R.K."/>
        </authorList>
    </citation>
    <scope>NUCLEOTIDE SEQUENCE [LARGE SCALE GENOMIC DNA]</scope>
</reference>
<reference key="6">
    <citation type="submission" date="2005-09" db="EMBL/GenBank/DDBJ databases">
        <authorList>
            <person name="Mural R.J."/>
            <person name="Istrail S."/>
            <person name="Sutton G."/>
            <person name="Florea L."/>
            <person name="Halpern A.L."/>
            <person name="Mobarry C.M."/>
            <person name="Lippert R."/>
            <person name="Walenz B."/>
            <person name="Shatkay H."/>
            <person name="Dew I."/>
            <person name="Miller J.R."/>
            <person name="Flanigan M.J."/>
            <person name="Edwards N.J."/>
            <person name="Bolanos R."/>
            <person name="Fasulo D."/>
            <person name="Halldorsson B.V."/>
            <person name="Hannenhalli S."/>
            <person name="Turner R."/>
            <person name="Yooseph S."/>
            <person name="Lu F."/>
            <person name="Nusskern D.R."/>
            <person name="Shue B.C."/>
            <person name="Zheng X.H."/>
            <person name="Zhong F."/>
            <person name="Delcher A.L."/>
            <person name="Huson D.H."/>
            <person name="Kravitz S.A."/>
            <person name="Mouchard L."/>
            <person name="Reinert K."/>
            <person name="Remington K.A."/>
            <person name="Clark A.G."/>
            <person name="Waterman M.S."/>
            <person name="Eichler E.E."/>
            <person name="Adams M.D."/>
            <person name="Hunkapiller M.W."/>
            <person name="Myers E.W."/>
            <person name="Venter J.C."/>
        </authorList>
    </citation>
    <scope>NUCLEOTIDE SEQUENCE [LARGE SCALE GENOMIC DNA]</scope>
</reference>
<reference key="7">
    <citation type="journal article" date="2004" name="Genome Res.">
        <title>The status, quality, and expansion of the NIH full-length cDNA project: the Mammalian Gene Collection (MGC).</title>
        <authorList>
            <consortium name="The MGC Project Team"/>
        </authorList>
    </citation>
    <scope>NUCLEOTIDE SEQUENCE [LARGE SCALE MRNA]</scope>
    <source>
        <tissue>Pancreas</tissue>
    </source>
</reference>
<reference key="8">
    <citation type="journal article" date="1987" name="Eur. J. Biochem.">
        <title>Complete amino acid sequence of an immunoreactive form of human pancreatic stone protein isolated from pancreatic juice.</title>
        <authorList>
            <person name="de Caro A.M."/>
            <person name="Bonicel J.J."/>
            <person name="Rouimi P."/>
            <person name="de Caro J.D."/>
            <person name="Sarles H."/>
            <person name="Rovery M."/>
        </authorList>
    </citation>
    <scope>PROTEIN SEQUENCE OF 34-166</scope>
</reference>
<reference key="9">
    <citation type="journal article" date="1986" name="Biochem. J.">
        <title>Partial amino acid sequence of human pancreatic stone protein, a novel pancreatic secretory protein.</title>
        <authorList>
            <person name="Montalto G."/>
            <person name="Bonicel J.J."/>
            <person name="Multigner L."/>
            <person name="Rovery M."/>
            <person name="Sarles H."/>
            <person name="de Caro A.M."/>
        </authorList>
    </citation>
    <scope>PROTEIN SEQUENCE OF 34-98</scope>
</reference>
<reference key="10">
    <citation type="journal article" date="1985" name="J. Clin. Invest.">
        <title>Isolation, characterization, and distribution of an unusual pancreatic human secretory protein.</title>
        <authorList>
            <person name="Gross J."/>
            <person name="Carlson R.I."/>
            <person name="Brauer A.W."/>
            <person name="Margolies M.N."/>
            <person name="Warshaw A.L."/>
            <person name="Wands J.R."/>
        </authorList>
    </citation>
    <scope>PROTEIN SEQUENCE OF 34-78</scope>
</reference>
<reference key="11">
    <citation type="journal article" date="1989" name="Biochim. Biophys. Acta">
        <title>N-terminal sequence extension in the glycosylated forms of human pancreatic stone protein. The 5-oxoproline N-terminal chain is O-glycosylated on the 5th amino acid residue.</title>
        <authorList>
            <person name="de Caro A.M."/>
            <person name="Adrich Z."/>
            <person name="Fournet B."/>
            <person name="Capon C."/>
            <person name="Bonicel J.J."/>
            <person name="de Caro J.D."/>
            <person name="Rovery M."/>
        </authorList>
    </citation>
    <scope>PROTEIN SEQUENCE OF 23-47</scope>
    <scope>PYROGLUTAMATE FORMATION AT GLN-23</scope>
    <scope>GLYCOSYLATION AT THR-27</scope>
</reference>
<reference key="12">
    <citation type="journal article" date="1987" name="FEBS Lett.">
        <title>Cleavage of the Arg-Ile bond in the native polypeptide chain of human pancreatic stone protein.</title>
        <authorList>
            <person name="Rouimi P."/>
            <person name="Bonicel J."/>
            <person name="Rovery M."/>
            <person name="de Caro A."/>
        </authorList>
    </citation>
    <scope>PROTEIN SEQUENCE OF 33-58</scope>
</reference>
<reference key="13">
    <citation type="journal article" date="2004" name="Protein Sci.">
        <title>Signal peptide prediction based on analysis of experimentally verified cleavage sites.</title>
        <authorList>
            <person name="Zhang Z."/>
            <person name="Henzel W.J."/>
        </authorList>
    </citation>
    <scope>PROTEIN SEQUENCE OF 23-37</scope>
</reference>
<reference key="14">
    <citation type="journal article" date="1989" name="Biochem. J.">
        <title>The human reg gene encodes pancreatic stone protein.</title>
        <authorList>
            <person name="Stewart T.A."/>
        </authorList>
    </citation>
    <scope>IDENTITY OF REG WITH PSP</scope>
</reference>
<reference key="15">
    <citation type="journal article" date="1990" name="FEBS Lett.">
        <title>Isolation and characterization of human reg protein produced in Saccharomyces cerevisiae.</title>
        <authorList>
            <person name="Itoh T."/>
            <person name="Tsuzuki H."/>
            <person name="Katoh T."/>
            <person name="Teraoka H."/>
            <person name="Matsumoto K."/>
            <person name="Yoshida N."/>
            <person name="Terazono K."/>
            <person name="Watanabe T."/>
            <person name="Yonekura H."/>
            <person name="Yamamoto H."/>
            <person name="Okamoto H."/>
        </authorList>
    </citation>
    <scope>DISULFIDE BONDS</scope>
</reference>
<reference key="16">
    <citation type="journal article" date="1990" name="J. Clin. Invest.">
        <title>Enhanced expression of an exocrine pancreatic protein in Alzheimer's disease and the developing human brain.</title>
        <authorList>
            <person name="de la Monte S.M."/>
            <person name="Ozturk M."/>
            <person name="Wands J.R."/>
        </authorList>
    </citation>
    <scope>TISSUE SPECIFICITY</scope>
    <scope>DEVELOPMENTAL STAGE</scope>
</reference>
<reference key="17">
    <citation type="journal article" date="1996" name="EMBO J.">
        <title>Crystal structure of human lithostathine, the pancreatic inhibitor of stone formation.</title>
        <authorList>
            <person name="Bertrand J.A."/>
            <person name="Pignol D."/>
            <person name="Bernard J.-P."/>
            <person name="Verdier J.-M."/>
            <person name="Dagorn J.-C."/>
            <person name="Fontecilla-Camps J.-C."/>
        </authorList>
    </citation>
    <scope>X-RAY CRYSTALLOGRAPHY (1.5 ANGSTROMS)</scope>
</reference>
<reference key="18">
    <citation type="journal article" date="2000" name="J. Biol. Chem.">
        <title>Mechanism of calcite crystal growth inhibition by the N-terminal undecapeptide of lithostathine.</title>
        <authorList>
            <person name="Gerbaud V."/>
            <person name="Pignol D."/>
            <person name="Loret E."/>
            <person name="Bertrand J.A."/>
            <person name="Berland Y."/>
            <person name="Fontecilla-Camps J.-C."/>
            <person name="Canselier J.P."/>
            <person name="Gabas N."/>
            <person name="Verdier J.-M."/>
        </authorList>
    </citation>
    <scope>X-RAY CRYSTALLOGRAPHY (1.3 ANGSTROMS) OF 23-166</scope>
</reference>
<reference key="19">
    <citation type="journal article" date="1996" name="Protein Eng.">
        <title>What function for human lithostathine?: structural investigations by three-dimensional structure modeling and high-resolution NMR spectroscopy.</title>
        <authorList>
            <person name="Patard L."/>
            <person name="Stoven V."/>
            <person name="Gharib B."/>
            <person name="Bontems F."/>
            <person name="Lallemand J.-Y."/>
            <person name="de Reggi M."/>
        </authorList>
    </citation>
    <scope>STRUCTURE BY NMR OF 34-164</scope>
</reference>
<dbReference type="EMBL" id="M18963">
    <property type="protein sequence ID" value="AAA36558.1"/>
    <property type="molecule type" value="mRNA"/>
</dbReference>
<dbReference type="EMBL" id="J05412">
    <property type="protein sequence ID" value="AAA36559.1"/>
    <property type="molecule type" value="Genomic_DNA"/>
</dbReference>
<dbReference type="EMBL" id="M27190">
    <property type="protein sequence ID" value="AAA60546.1"/>
    <property type="molecule type" value="mRNA"/>
</dbReference>
<dbReference type="EMBL" id="M27189">
    <property type="protein sequence ID" value="AAA60545.1"/>
    <property type="molecule type" value="Genomic_DNA"/>
</dbReference>
<dbReference type="EMBL" id="AF172331">
    <property type="protein sequence ID" value="AAD51330.1"/>
    <property type="molecule type" value="mRNA"/>
</dbReference>
<dbReference type="EMBL" id="AC017004">
    <property type="protein sequence ID" value="AAX88842.1"/>
    <property type="molecule type" value="Genomic_DNA"/>
</dbReference>
<dbReference type="EMBL" id="CH471053">
    <property type="protein sequence ID" value="EAW99576.1"/>
    <property type="molecule type" value="Genomic_DNA"/>
</dbReference>
<dbReference type="EMBL" id="CH471053">
    <property type="protein sequence ID" value="EAW99578.1"/>
    <property type="molecule type" value="Genomic_DNA"/>
</dbReference>
<dbReference type="EMBL" id="BC005350">
    <property type="protein sequence ID" value="AAH05350.1"/>
    <property type="molecule type" value="mRNA"/>
</dbReference>
<dbReference type="CCDS" id="CCDS1964.1"/>
<dbReference type="PIR" id="A35197">
    <property type="entry name" value="RGHU1A"/>
</dbReference>
<dbReference type="PIR" id="A45751">
    <property type="entry name" value="A45751"/>
</dbReference>
<dbReference type="RefSeq" id="NP_002900.2">
    <property type="nucleotide sequence ID" value="NM_002909.4"/>
</dbReference>
<dbReference type="PDB" id="1LIT">
    <property type="method" value="X-ray"/>
    <property type="resolution" value="1.55 A"/>
    <property type="chains" value="A=23-166"/>
</dbReference>
<dbReference type="PDB" id="1QDD">
    <property type="method" value="X-ray"/>
    <property type="resolution" value="1.30 A"/>
    <property type="chains" value="A=23-166"/>
</dbReference>
<dbReference type="PDBsum" id="1LIT"/>
<dbReference type="PDBsum" id="1QDD"/>
<dbReference type="BMRB" id="P05451"/>
<dbReference type="SMR" id="P05451"/>
<dbReference type="BioGRID" id="111899">
    <property type="interactions" value="6"/>
</dbReference>
<dbReference type="FunCoup" id="P05451">
    <property type="interactions" value="22"/>
</dbReference>
<dbReference type="IntAct" id="P05451">
    <property type="interactions" value="4"/>
</dbReference>
<dbReference type="MINT" id="P05451"/>
<dbReference type="STRING" id="9606.ENSP00000233735"/>
<dbReference type="DrugBank" id="DB04522">
    <property type="generic name" value="Dexfosfoserine"/>
</dbReference>
<dbReference type="DrugBank" id="DB03721">
    <property type="generic name" value="N-acetyl-alpha-neuraminic acid"/>
</dbReference>
<dbReference type="MEROPS" id="I63.002"/>
<dbReference type="TCDB" id="1.C.111.1.17">
    <property type="family name" value="the regiiiGama (regiiiGama) family"/>
</dbReference>
<dbReference type="UniLectin" id="P05451"/>
<dbReference type="GlyCosmos" id="P05451">
    <property type="glycosylation" value="1 site, No reported glycans"/>
</dbReference>
<dbReference type="GlyGen" id="P05451">
    <property type="glycosylation" value="2 sites"/>
</dbReference>
<dbReference type="iPTMnet" id="P05451"/>
<dbReference type="PhosphoSitePlus" id="P05451"/>
<dbReference type="BioMuta" id="REG1A"/>
<dbReference type="DMDM" id="131433"/>
<dbReference type="MassIVE" id="P05451"/>
<dbReference type="PaxDb" id="9606-ENSP00000233735"/>
<dbReference type="PeptideAtlas" id="P05451"/>
<dbReference type="ProteomicsDB" id="51839"/>
<dbReference type="Antibodypedia" id="31680">
    <property type="antibodies" value="387 antibodies from 34 providers"/>
</dbReference>
<dbReference type="DNASU" id="5967"/>
<dbReference type="Ensembl" id="ENST00000233735.2">
    <property type="protein sequence ID" value="ENSP00000233735.1"/>
    <property type="gene ID" value="ENSG00000115386.6"/>
</dbReference>
<dbReference type="GeneID" id="5967"/>
<dbReference type="KEGG" id="hsa:5967"/>
<dbReference type="MANE-Select" id="ENST00000233735.2">
    <property type="protein sequence ID" value="ENSP00000233735.1"/>
    <property type="RefSeq nucleotide sequence ID" value="NM_002909.5"/>
    <property type="RefSeq protein sequence ID" value="NP_002900.2"/>
</dbReference>
<dbReference type="UCSC" id="uc002snz.3">
    <property type="organism name" value="human"/>
</dbReference>
<dbReference type="AGR" id="HGNC:9951"/>
<dbReference type="CTD" id="5967"/>
<dbReference type="DisGeNET" id="5967"/>
<dbReference type="GeneCards" id="REG1A"/>
<dbReference type="HGNC" id="HGNC:9951">
    <property type="gene designation" value="REG1A"/>
</dbReference>
<dbReference type="HPA" id="ENSG00000115386">
    <property type="expression patterns" value="Tissue enriched (pancreas)"/>
</dbReference>
<dbReference type="MIM" id="167770">
    <property type="type" value="gene"/>
</dbReference>
<dbReference type="neXtProt" id="NX_P05451"/>
<dbReference type="OpenTargets" id="ENSG00000115386"/>
<dbReference type="PharmGKB" id="PA34318"/>
<dbReference type="VEuPathDB" id="HostDB:ENSG00000115386"/>
<dbReference type="eggNOG" id="KOG4297">
    <property type="taxonomic scope" value="Eukaryota"/>
</dbReference>
<dbReference type="GeneTree" id="ENSGT00940000162393"/>
<dbReference type="HOGENOM" id="CLU_049894_18_0_1"/>
<dbReference type="InParanoid" id="P05451"/>
<dbReference type="OMA" id="CYYFMED"/>
<dbReference type="OrthoDB" id="441660at2759"/>
<dbReference type="PAN-GO" id="P05451">
    <property type="GO annotations" value="8 GO annotations based on evolutionary models"/>
</dbReference>
<dbReference type="PhylomeDB" id="P05451"/>
<dbReference type="PathwayCommons" id="P05451"/>
<dbReference type="Reactome" id="R-HSA-9925561">
    <property type="pathway name" value="Developmental Lineage of Pancreatic Acinar Cells"/>
</dbReference>
<dbReference type="SignaLink" id="P05451"/>
<dbReference type="BioGRID-ORCS" id="5967">
    <property type="hits" value="9 hits in 1108 CRISPR screens"/>
</dbReference>
<dbReference type="ChiTaRS" id="REG1A">
    <property type="organism name" value="human"/>
</dbReference>
<dbReference type="EvolutionaryTrace" id="P05451"/>
<dbReference type="GeneWiki" id="REG1A"/>
<dbReference type="GenomeRNAi" id="5967"/>
<dbReference type="Pharos" id="P05451">
    <property type="development level" value="Tbio"/>
</dbReference>
<dbReference type="PRO" id="PR:P05451"/>
<dbReference type="Proteomes" id="UP000005640">
    <property type="component" value="Chromosome 2"/>
</dbReference>
<dbReference type="RNAct" id="P05451">
    <property type="molecule type" value="protein"/>
</dbReference>
<dbReference type="Bgee" id="ENSG00000115386">
    <property type="expression patterns" value="Expressed in body of pancreas and 95 other cell types or tissues"/>
</dbReference>
<dbReference type="GO" id="GO:0070062">
    <property type="term" value="C:extracellular exosome"/>
    <property type="evidence" value="ECO:0007005"/>
    <property type="project" value="UniProtKB"/>
</dbReference>
<dbReference type="GO" id="GO:0005615">
    <property type="term" value="C:extracellular space"/>
    <property type="evidence" value="ECO:0000318"/>
    <property type="project" value="GO_Central"/>
</dbReference>
<dbReference type="GO" id="GO:0008083">
    <property type="term" value="F:growth factor activity"/>
    <property type="evidence" value="ECO:0000314"/>
    <property type="project" value="MGI"/>
</dbReference>
<dbReference type="GO" id="GO:0140678">
    <property type="term" value="F:molecular function inhibitor activity"/>
    <property type="evidence" value="ECO:0000314"/>
    <property type="project" value="DisProt"/>
</dbReference>
<dbReference type="GO" id="GO:0070492">
    <property type="term" value="F:oligosaccharide binding"/>
    <property type="evidence" value="ECO:0000318"/>
    <property type="project" value="GO_Central"/>
</dbReference>
<dbReference type="GO" id="GO:0042834">
    <property type="term" value="F:peptidoglycan binding"/>
    <property type="evidence" value="ECO:0000318"/>
    <property type="project" value="GO_Central"/>
</dbReference>
<dbReference type="GO" id="GO:0038023">
    <property type="term" value="F:signaling receptor activity"/>
    <property type="evidence" value="ECO:0000318"/>
    <property type="project" value="GO_Central"/>
</dbReference>
<dbReference type="GO" id="GO:0061844">
    <property type="term" value="P:antimicrobial humoral immune response mediated by antimicrobial peptide"/>
    <property type="evidence" value="ECO:0000318"/>
    <property type="project" value="GO_Central"/>
</dbReference>
<dbReference type="GO" id="GO:0008284">
    <property type="term" value="P:positive regulation of cell population proliferation"/>
    <property type="evidence" value="ECO:0000318"/>
    <property type="project" value="GO_Central"/>
</dbReference>
<dbReference type="GO" id="GO:0043434">
    <property type="term" value="P:response to peptide hormone"/>
    <property type="evidence" value="ECO:0000318"/>
    <property type="project" value="GO_Central"/>
</dbReference>
<dbReference type="FunFam" id="3.10.100.10:FF:000059">
    <property type="entry name" value="Regenerating islet-derived 1"/>
    <property type="match status" value="1"/>
</dbReference>
<dbReference type="Gene3D" id="3.10.100.10">
    <property type="entry name" value="Mannose-Binding Protein A, subunit A"/>
    <property type="match status" value="1"/>
</dbReference>
<dbReference type="InterPro" id="IPR001304">
    <property type="entry name" value="C-type_lectin-like"/>
</dbReference>
<dbReference type="InterPro" id="IPR016186">
    <property type="entry name" value="C-type_lectin-like/link_sf"/>
</dbReference>
<dbReference type="InterPro" id="IPR050111">
    <property type="entry name" value="C-type_lectin/snaclec_domain"/>
</dbReference>
<dbReference type="InterPro" id="IPR018378">
    <property type="entry name" value="C-type_lectin_CS"/>
</dbReference>
<dbReference type="InterPro" id="IPR016187">
    <property type="entry name" value="CTDL_fold"/>
</dbReference>
<dbReference type="PANTHER" id="PTHR22803">
    <property type="entry name" value="MANNOSE, PHOSPHOLIPASE, LECTIN RECEPTOR RELATED"/>
    <property type="match status" value="1"/>
</dbReference>
<dbReference type="Pfam" id="PF00059">
    <property type="entry name" value="Lectin_C"/>
    <property type="match status" value="1"/>
</dbReference>
<dbReference type="PRINTS" id="PR01504">
    <property type="entry name" value="PNCREATITSAP"/>
</dbReference>
<dbReference type="SMART" id="SM00034">
    <property type="entry name" value="CLECT"/>
    <property type="match status" value="1"/>
</dbReference>
<dbReference type="SUPFAM" id="SSF56436">
    <property type="entry name" value="C-type lectin-like"/>
    <property type="match status" value="1"/>
</dbReference>
<dbReference type="PROSITE" id="PS00615">
    <property type="entry name" value="C_TYPE_LECTIN_1"/>
    <property type="match status" value="1"/>
</dbReference>
<dbReference type="PROSITE" id="PS50041">
    <property type="entry name" value="C_TYPE_LECTIN_2"/>
    <property type="match status" value="1"/>
</dbReference>